<sequence length="387" mass="43649">MEDDAPVIYGLEFQARALTAQTAETDAIRFLVGTQSLRYDNQIHVIDFDDENNIINKNVLLHHAGEIWQIGASPADRNVLATCYNKISDSKVMTCAAVWRIPKELQGGNHESPDDTSSNAQSLELLCHLDSTAHGNMACVTWEPLGDGKKLLSLADNYLLIWDLQESSTKSVLSSSATLEGKGQLRFTSGKWSPHHNCTQVATANDTAIRGWDIRSMRQIYCIENAHGQLVRDLDFNPNKQYYLASCGDDCKVKFWDTRNIHEPVKTLEEHSHWVWSVRYNHSHDQLVLTGSSDSRVILSNMVSISSEPFGHLVDDEDLSDQEDNPQEEKTKEPLQDSIIGTYEEHEDSVYAVEWSSADPWLFASLSYDGRLVINRVPRALKYNILL</sequence>
<keyword id="KW-0333">Golgi apparatus</keyword>
<keyword id="KW-1185">Reference proteome</keyword>
<keyword id="KW-0677">Repeat</keyword>
<keyword id="KW-0853">WD repeat</keyword>
<proteinExistence type="evidence at transcript level"/>
<reference key="1">
    <citation type="submission" date="2005-10" db="EMBL/GenBank/DDBJ databases">
        <authorList>
            <consortium name="NIH - Xenopus Gene Collection (XGC) project"/>
        </authorList>
    </citation>
    <scope>NUCLEOTIDE SEQUENCE [LARGE SCALE MRNA]</scope>
    <source>
        <tissue>Testis</tissue>
    </source>
</reference>
<organism>
    <name type="scientific">Xenopus laevis</name>
    <name type="common">African clawed frog</name>
    <dbReference type="NCBI Taxonomy" id="8355"/>
    <lineage>
        <taxon>Eukaryota</taxon>
        <taxon>Metazoa</taxon>
        <taxon>Chordata</taxon>
        <taxon>Craniata</taxon>
        <taxon>Vertebrata</taxon>
        <taxon>Euteleostomi</taxon>
        <taxon>Amphibia</taxon>
        <taxon>Batrachia</taxon>
        <taxon>Anura</taxon>
        <taxon>Pipoidea</taxon>
        <taxon>Pipidae</taxon>
        <taxon>Xenopodinae</taxon>
        <taxon>Xenopus</taxon>
        <taxon>Xenopus</taxon>
    </lineage>
</organism>
<gene>
    <name evidence="2" type="primary">eipr1</name>
</gene>
<comment type="function">
    <text evidence="1">May act as a component of endosomal retrieval machinery that is involved in protein transport from early endosomes to either recycling endosomes or the trans-Golgi network.</text>
</comment>
<comment type="subcellular location">
    <subcellularLocation>
        <location evidence="1">Golgi apparatus</location>
        <location evidence="1">trans-Golgi network</location>
    </subcellularLocation>
</comment>
<comment type="similarity">
    <text evidence="4">Belongs to the WD repeat EIPR1 family.</text>
</comment>
<feature type="chain" id="PRO_0000051305" description="EARP-interacting protein homolog">
    <location>
        <begin position="1"/>
        <end position="387"/>
    </location>
</feature>
<feature type="repeat" description="WD 1">
    <location>
        <begin position="132"/>
        <end position="172"/>
    </location>
</feature>
<feature type="repeat" description="WD 2">
    <location>
        <begin position="182"/>
        <end position="222"/>
    </location>
</feature>
<feature type="repeat" description="WD 3">
    <location>
        <begin position="226"/>
        <end position="266"/>
    </location>
</feature>
<feature type="repeat" description="WD 4">
    <location>
        <begin position="270"/>
        <end position="310"/>
    </location>
</feature>
<feature type="repeat" description="WD 5">
    <location>
        <begin position="345"/>
        <end position="385"/>
    </location>
</feature>
<feature type="region of interest" description="Disordered" evidence="3">
    <location>
        <begin position="311"/>
        <end position="339"/>
    </location>
</feature>
<feature type="compositionally biased region" description="Acidic residues" evidence="3">
    <location>
        <begin position="315"/>
        <end position="326"/>
    </location>
</feature>
<protein>
    <recommendedName>
        <fullName evidence="2">EARP-interacting protein homolog</fullName>
    </recommendedName>
</protein>
<evidence type="ECO:0000250" key="1">
    <source>
        <dbReference type="UniProtKB" id="Q53HC9"/>
    </source>
</evidence>
<evidence type="ECO:0000250" key="2">
    <source>
        <dbReference type="UniProtKB" id="Q5PPK9"/>
    </source>
</evidence>
<evidence type="ECO:0000256" key="3">
    <source>
        <dbReference type="SAM" id="MobiDB-lite"/>
    </source>
</evidence>
<evidence type="ECO:0000305" key="4"/>
<dbReference type="EMBL" id="BC106571">
    <property type="protein sequence ID" value="AAI06572.1"/>
    <property type="molecule type" value="mRNA"/>
</dbReference>
<dbReference type="RefSeq" id="NP_001090120.1">
    <property type="nucleotide sequence ID" value="NM_001096651.1"/>
</dbReference>
<dbReference type="SMR" id="Q3KPT3"/>
<dbReference type="DNASU" id="735198"/>
<dbReference type="GeneID" id="735198"/>
<dbReference type="KEGG" id="xla:735198"/>
<dbReference type="AGR" id="Xenbase:XB-GENE-953870"/>
<dbReference type="CTD" id="735198"/>
<dbReference type="Xenbase" id="XB-GENE-953870">
    <property type="gene designation" value="eipr1.L"/>
</dbReference>
<dbReference type="OrthoDB" id="196957at2759"/>
<dbReference type="Proteomes" id="UP000186698">
    <property type="component" value="Chromosome 5L"/>
</dbReference>
<dbReference type="Bgee" id="735198">
    <property type="expression patterns" value="Expressed in testis and 20 other cell types or tissues"/>
</dbReference>
<dbReference type="GO" id="GO:0005794">
    <property type="term" value="C:Golgi apparatus"/>
    <property type="evidence" value="ECO:0007669"/>
    <property type="project" value="UniProtKB-SubCell"/>
</dbReference>
<dbReference type="GO" id="GO:0032456">
    <property type="term" value="P:endocytic recycling"/>
    <property type="evidence" value="ECO:0000250"/>
    <property type="project" value="UniProtKB"/>
</dbReference>
<dbReference type="GO" id="GO:0016567">
    <property type="term" value="P:protein ubiquitination"/>
    <property type="evidence" value="ECO:0000318"/>
    <property type="project" value="GO_Central"/>
</dbReference>
<dbReference type="FunFam" id="2.130.10.10:FF:000156">
    <property type="entry name" value="protein TSSC1 isoform X1"/>
    <property type="match status" value="1"/>
</dbReference>
<dbReference type="Gene3D" id="2.130.10.10">
    <property type="entry name" value="YVTN repeat-like/Quinoprotein amine dehydrogenase"/>
    <property type="match status" value="1"/>
</dbReference>
<dbReference type="InterPro" id="IPR040323">
    <property type="entry name" value="EIPR1"/>
</dbReference>
<dbReference type="InterPro" id="IPR015943">
    <property type="entry name" value="WD40/YVTN_repeat-like_dom_sf"/>
</dbReference>
<dbReference type="InterPro" id="IPR019775">
    <property type="entry name" value="WD40_repeat_CS"/>
</dbReference>
<dbReference type="InterPro" id="IPR001680">
    <property type="entry name" value="WD40_rpt"/>
</dbReference>
<dbReference type="PANTHER" id="PTHR14205:SF15">
    <property type="entry name" value="EARP AND GARP COMPLEX-INTERACTING PROTEIN 1"/>
    <property type="match status" value="1"/>
</dbReference>
<dbReference type="PANTHER" id="PTHR14205">
    <property type="entry name" value="WD-REPEAT PROTEIN"/>
    <property type="match status" value="1"/>
</dbReference>
<dbReference type="Pfam" id="PF23609">
    <property type="entry name" value="Beta-prop_EIPR1"/>
    <property type="match status" value="1"/>
</dbReference>
<dbReference type="Pfam" id="PF00400">
    <property type="entry name" value="WD40"/>
    <property type="match status" value="1"/>
</dbReference>
<dbReference type="SMART" id="SM00320">
    <property type="entry name" value="WD40"/>
    <property type="match status" value="5"/>
</dbReference>
<dbReference type="SUPFAM" id="SSF101908">
    <property type="entry name" value="Putative isomerase YbhE"/>
    <property type="match status" value="1"/>
</dbReference>
<dbReference type="PROSITE" id="PS00678">
    <property type="entry name" value="WD_REPEATS_1"/>
    <property type="match status" value="1"/>
</dbReference>
<dbReference type="PROSITE" id="PS50082">
    <property type="entry name" value="WD_REPEATS_2"/>
    <property type="match status" value="1"/>
</dbReference>
<dbReference type="PROSITE" id="PS50294">
    <property type="entry name" value="WD_REPEATS_REGION"/>
    <property type="match status" value="1"/>
</dbReference>
<accession>Q3KPT3</accession>
<name>EIPR1_XENLA</name>